<comment type="function">
    <text evidence="1">One of two assembly initiator proteins, it binds directly to the 5'-end of the 23S rRNA, where it nucleates assembly of the 50S subunit.</text>
</comment>
<comment type="function">
    <text evidence="1">One of the proteins that surrounds the polypeptide exit tunnel on the outside of the subunit.</text>
</comment>
<comment type="subunit">
    <text evidence="1">Part of the 50S ribosomal subunit.</text>
</comment>
<comment type="similarity">
    <text evidence="1">Belongs to the universal ribosomal protein uL24 family.</text>
</comment>
<name>RL24_BACC2</name>
<dbReference type="EMBL" id="CP001186">
    <property type="protein sequence ID" value="ACK97358.1"/>
    <property type="molecule type" value="Genomic_DNA"/>
</dbReference>
<dbReference type="RefSeq" id="WP_000558200.1">
    <property type="nucleotide sequence ID" value="NC_011772.1"/>
</dbReference>
<dbReference type="SMR" id="B7IT30"/>
<dbReference type="GeneID" id="93010932"/>
<dbReference type="KEGG" id="bcg:BCG9842_B5184"/>
<dbReference type="HOGENOM" id="CLU_093315_2_0_9"/>
<dbReference type="Proteomes" id="UP000006744">
    <property type="component" value="Chromosome"/>
</dbReference>
<dbReference type="GO" id="GO:1990904">
    <property type="term" value="C:ribonucleoprotein complex"/>
    <property type="evidence" value="ECO:0007669"/>
    <property type="project" value="UniProtKB-KW"/>
</dbReference>
<dbReference type="GO" id="GO:0005840">
    <property type="term" value="C:ribosome"/>
    <property type="evidence" value="ECO:0007669"/>
    <property type="project" value="UniProtKB-KW"/>
</dbReference>
<dbReference type="GO" id="GO:0019843">
    <property type="term" value="F:rRNA binding"/>
    <property type="evidence" value="ECO:0007669"/>
    <property type="project" value="UniProtKB-UniRule"/>
</dbReference>
<dbReference type="GO" id="GO:0003735">
    <property type="term" value="F:structural constituent of ribosome"/>
    <property type="evidence" value="ECO:0007669"/>
    <property type="project" value="InterPro"/>
</dbReference>
<dbReference type="GO" id="GO:0006412">
    <property type="term" value="P:translation"/>
    <property type="evidence" value="ECO:0007669"/>
    <property type="project" value="UniProtKB-UniRule"/>
</dbReference>
<dbReference type="CDD" id="cd06089">
    <property type="entry name" value="KOW_RPL26"/>
    <property type="match status" value="1"/>
</dbReference>
<dbReference type="FunFam" id="2.30.30.30:FF:000004">
    <property type="entry name" value="50S ribosomal protein L24"/>
    <property type="match status" value="1"/>
</dbReference>
<dbReference type="Gene3D" id="2.30.30.30">
    <property type="match status" value="1"/>
</dbReference>
<dbReference type="HAMAP" id="MF_01326_B">
    <property type="entry name" value="Ribosomal_uL24_B"/>
    <property type="match status" value="1"/>
</dbReference>
<dbReference type="InterPro" id="IPR005824">
    <property type="entry name" value="KOW"/>
</dbReference>
<dbReference type="InterPro" id="IPR014722">
    <property type="entry name" value="Rib_uL2_dom2"/>
</dbReference>
<dbReference type="InterPro" id="IPR003256">
    <property type="entry name" value="Ribosomal_uL24"/>
</dbReference>
<dbReference type="InterPro" id="IPR005825">
    <property type="entry name" value="Ribosomal_uL24_CS"/>
</dbReference>
<dbReference type="InterPro" id="IPR041988">
    <property type="entry name" value="Ribosomal_uL24_KOW"/>
</dbReference>
<dbReference type="InterPro" id="IPR008991">
    <property type="entry name" value="Translation_prot_SH3-like_sf"/>
</dbReference>
<dbReference type="NCBIfam" id="TIGR01079">
    <property type="entry name" value="rplX_bact"/>
    <property type="match status" value="1"/>
</dbReference>
<dbReference type="PANTHER" id="PTHR12903">
    <property type="entry name" value="MITOCHONDRIAL RIBOSOMAL PROTEIN L24"/>
    <property type="match status" value="1"/>
</dbReference>
<dbReference type="Pfam" id="PF00467">
    <property type="entry name" value="KOW"/>
    <property type="match status" value="1"/>
</dbReference>
<dbReference type="Pfam" id="PF17136">
    <property type="entry name" value="ribosomal_L24"/>
    <property type="match status" value="1"/>
</dbReference>
<dbReference type="SMART" id="SM00739">
    <property type="entry name" value="KOW"/>
    <property type="match status" value="1"/>
</dbReference>
<dbReference type="SUPFAM" id="SSF50104">
    <property type="entry name" value="Translation proteins SH3-like domain"/>
    <property type="match status" value="1"/>
</dbReference>
<dbReference type="PROSITE" id="PS01108">
    <property type="entry name" value="RIBOSOMAL_L24"/>
    <property type="match status" value="1"/>
</dbReference>
<protein>
    <recommendedName>
        <fullName evidence="1">Large ribosomal subunit protein uL24</fullName>
    </recommendedName>
    <alternativeName>
        <fullName evidence="2">50S ribosomal protein L24</fullName>
    </alternativeName>
</protein>
<gene>
    <name evidence="1" type="primary">rplX</name>
    <name type="ordered locus">BCG9842_B5184</name>
</gene>
<evidence type="ECO:0000255" key="1">
    <source>
        <dbReference type="HAMAP-Rule" id="MF_01326"/>
    </source>
</evidence>
<evidence type="ECO:0000305" key="2"/>
<keyword id="KW-0687">Ribonucleoprotein</keyword>
<keyword id="KW-0689">Ribosomal protein</keyword>
<keyword id="KW-0694">RNA-binding</keyword>
<keyword id="KW-0699">rRNA-binding</keyword>
<sequence length="103" mass="11228">MHVKKGDKVQVITGKDKGKQGVILVAFPKQNRVIVEGVNIVKKHSKPSQLNPQGGIITKEAPIHVSNVMILDPKTGEPTRVGFKVEDGKKVRIAKKSGELLDK</sequence>
<accession>B7IT30</accession>
<proteinExistence type="inferred from homology"/>
<feature type="chain" id="PRO_1000141961" description="Large ribosomal subunit protein uL24">
    <location>
        <begin position="1"/>
        <end position="103"/>
    </location>
</feature>
<reference key="1">
    <citation type="submission" date="2008-10" db="EMBL/GenBank/DDBJ databases">
        <title>Genome sequence of Bacillus cereus G9842.</title>
        <authorList>
            <person name="Dodson R.J."/>
            <person name="Durkin A.S."/>
            <person name="Rosovitz M.J."/>
            <person name="Rasko D.A."/>
            <person name="Hoffmaster A."/>
            <person name="Ravel J."/>
            <person name="Sutton G."/>
        </authorList>
    </citation>
    <scope>NUCLEOTIDE SEQUENCE [LARGE SCALE GENOMIC DNA]</scope>
    <source>
        <strain>G9842</strain>
    </source>
</reference>
<organism>
    <name type="scientific">Bacillus cereus (strain G9842)</name>
    <dbReference type="NCBI Taxonomy" id="405531"/>
    <lineage>
        <taxon>Bacteria</taxon>
        <taxon>Bacillati</taxon>
        <taxon>Bacillota</taxon>
        <taxon>Bacilli</taxon>
        <taxon>Bacillales</taxon>
        <taxon>Bacillaceae</taxon>
        <taxon>Bacillus</taxon>
        <taxon>Bacillus cereus group</taxon>
    </lineage>
</organism>